<name>HIS1_NOCFA</name>
<accession>Q5YUV9</accession>
<reference key="1">
    <citation type="journal article" date="2004" name="Proc. Natl. Acad. Sci. U.S.A.">
        <title>The complete genomic sequence of Nocardia farcinica IFM 10152.</title>
        <authorList>
            <person name="Ishikawa J."/>
            <person name="Yamashita A."/>
            <person name="Mikami Y."/>
            <person name="Hoshino Y."/>
            <person name="Kurita H."/>
            <person name="Hotta K."/>
            <person name="Shiba T."/>
            <person name="Hattori M."/>
        </authorList>
    </citation>
    <scope>NUCLEOTIDE SEQUENCE [LARGE SCALE GENOMIC DNA]</scope>
    <source>
        <strain>IFM 10152</strain>
    </source>
</reference>
<keyword id="KW-0028">Amino-acid biosynthesis</keyword>
<keyword id="KW-0067">ATP-binding</keyword>
<keyword id="KW-0963">Cytoplasm</keyword>
<keyword id="KW-0328">Glycosyltransferase</keyword>
<keyword id="KW-0368">Histidine biosynthesis</keyword>
<keyword id="KW-0460">Magnesium</keyword>
<keyword id="KW-0479">Metal-binding</keyword>
<keyword id="KW-0547">Nucleotide-binding</keyword>
<keyword id="KW-1185">Reference proteome</keyword>
<keyword id="KW-0808">Transferase</keyword>
<protein>
    <recommendedName>
        <fullName evidence="1">ATP phosphoribosyltransferase</fullName>
        <shortName evidence="1">ATP-PRT</shortName>
        <shortName evidence="1">ATP-PRTase</shortName>
        <ecNumber evidence="1">2.4.2.17</ecNumber>
    </recommendedName>
</protein>
<feature type="chain" id="PRO_1000004483" description="ATP phosphoribosyltransferase">
    <location>
        <begin position="1"/>
        <end position="283"/>
    </location>
</feature>
<dbReference type="EC" id="2.4.2.17" evidence="1"/>
<dbReference type="EMBL" id="AP006618">
    <property type="protein sequence ID" value="BAD58032.1"/>
    <property type="molecule type" value="Genomic_DNA"/>
</dbReference>
<dbReference type="RefSeq" id="WP_011209717.1">
    <property type="nucleotide sequence ID" value="NC_006361.1"/>
</dbReference>
<dbReference type="SMR" id="Q5YUV9"/>
<dbReference type="STRING" id="247156.NFA_31850"/>
<dbReference type="GeneID" id="61133900"/>
<dbReference type="KEGG" id="nfa:NFA_31850"/>
<dbReference type="eggNOG" id="COG0040">
    <property type="taxonomic scope" value="Bacteria"/>
</dbReference>
<dbReference type="HOGENOM" id="CLU_038115_1_1_11"/>
<dbReference type="OrthoDB" id="9801867at2"/>
<dbReference type="UniPathway" id="UPA00031">
    <property type="reaction ID" value="UER00006"/>
</dbReference>
<dbReference type="Proteomes" id="UP000006820">
    <property type="component" value="Chromosome"/>
</dbReference>
<dbReference type="GO" id="GO:0005737">
    <property type="term" value="C:cytoplasm"/>
    <property type="evidence" value="ECO:0007669"/>
    <property type="project" value="UniProtKB-SubCell"/>
</dbReference>
<dbReference type="GO" id="GO:0005524">
    <property type="term" value="F:ATP binding"/>
    <property type="evidence" value="ECO:0007669"/>
    <property type="project" value="UniProtKB-KW"/>
</dbReference>
<dbReference type="GO" id="GO:0003879">
    <property type="term" value="F:ATP phosphoribosyltransferase activity"/>
    <property type="evidence" value="ECO:0007669"/>
    <property type="project" value="UniProtKB-UniRule"/>
</dbReference>
<dbReference type="GO" id="GO:0000287">
    <property type="term" value="F:magnesium ion binding"/>
    <property type="evidence" value="ECO:0007669"/>
    <property type="project" value="UniProtKB-UniRule"/>
</dbReference>
<dbReference type="GO" id="GO:0000105">
    <property type="term" value="P:L-histidine biosynthetic process"/>
    <property type="evidence" value="ECO:0007669"/>
    <property type="project" value="UniProtKB-UniRule"/>
</dbReference>
<dbReference type="CDD" id="cd13591">
    <property type="entry name" value="PBP2_HisGL1"/>
    <property type="match status" value="1"/>
</dbReference>
<dbReference type="FunFam" id="3.30.70.120:FF:000003">
    <property type="entry name" value="ATP phosphoribosyltransferase"/>
    <property type="match status" value="1"/>
</dbReference>
<dbReference type="Gene3D" id="3.30.70.120">
    <property type="match status" value="1"/>
</dbReference>
<dbReference type="Gene3D" id="3.40.190.10">
    <property type="entry name" value="Periplasmic binding protein-like II"/>
    <property type="match status" value="2"/>
</dbReference>
<dbReference type="HAMAP" id="MF_00079">
    <property type="entry name" value="HisG_Long"/>
    <property type="match status" value="1"/>
</dbReference>
<dbReference type="InterPro" id="IPR020621">
    <property type="entry name" value="ATP-PRT_HisG_long"/>
</dbReference>
<dbReference type="InterPro" id="IPR013820">
    <property type="entry name" value="ATP_PRibTrfase_cat"/>
</dbReference>
<dbReference type="InterPro" id="IPR018198">
    <property type="entry name" value="ATP_PRibTrfase_CS"/>
</dbReference>
<dbReference type="InterPro" id="IPR001348">
    <property type="entry name" value="ATP_PRibTrfase_HisG"/>
</dbReference>
<dbReference type="InterPro" id="IPR013115">
    <property type="entry name" value="HisG_C"/>
</dbReference>
<dbReference type="InterPro" id="IPR011322">
    <property type="entry name" value="N-reg_PII-like_a/b"/>
</dbReference>
<dbReference type="InterPro" id="IPR015867">
    <property type="entry name" value="N-reg_PII/ATP_PRibTrfase_C"/>
</dbReference>
<dbReference type="NCBIfam" id="TIGR00070">
    <property type="entry name" value="hisG"/>
    <property type="match status" value="1"/>
</dbReference>
<dbReference type="NCBIfam" id="TIGR03455">
    <property type="entry name" value="HisG_C-term"/>
    <property type="match status" value="1"/>
</dbReference>
<dbReference type="PANTHER" id="PTHR21403:SF8">
    <property type="entry name" value="ATP PHOSPHORIBOSYLTRANSFERASE"/>
    <property type="match status" value="1"/>
</dbReference>
<dbReference type="PANTHER" id="PTHR21403">
    <property type="entry name" value="ATP PHOSPHORIBOSYLTRANSFERASE ATP-PRTASE"/>
    <property type="match status" value="1"/>
</dbReference>
<dbReference type="Pfam" id="PF01634">
    <property type="entry name" value="HisG"/>
    <property type="match status" value="1"/>
</dbReference>
<dbReference type="Pfam" id="PF08029">
    <property type="entry name" value="HisG_C"/>
    <property type="match status" value="1"/>
</dbReference>
<dbReference type="SUPFAM" id="SSF54913">
    <property type="entry name" value="GlnB-like"/>
    <property type="match status" value="1"/>
</dbReference>
<dbReference type="SUPFAM" id="SSF53850">
    <property type="entry name" value="Periplasmic binding protein-like II"/>
    <property type="match status" value="1"/>
</dbReference>
<dbReference type="PROSITE" id="PS01316">
    <property type="entry name" value="ATP_P_PHORIBOSYLTR"/>
    <property type="match status" value="1"/>
</dbReference>
<evidence type="ECO:0000255" key="1">
    <source>
        <dbReference type="HAMAP-Rule" id="MF_00079"/>
    </source>
</evidence>
<gene>
    <name evidence="1" type="primary">hisG</name>
    <name type="ordered locus">NFA_31850</name>
</gene>
<sequence>MLRVAVPNKGALSESATSILSEAGYRKRTDSRDLSVLDPENQVEFYFLRPKDIAVYVGSGELDLGITGRDLALDSGAPVQERLALGFGRSTFRYAAPAGREWKVEDLYDKRIATSYPNLVLSDLRRRGIEAEVIRLDGAVEISIQLGVADAIADVVGSGRTLRQHNLVAFGETLCDSEGVLVERVGADRDDRARNQLVARIQGVVFAQQYLMLDYDCPKELLDQAVQITPGLESPTVSPLADEGWVAVRALVPRGKGNSVMDRLADLGAKAILATDIRSCRAF</sequence>
<organism>
    <name type="scientific">Nocardia farcinica (strain IFM 10152)</name>
    <dbReference type="NCBI Taxonomy" id="247156"/>
    <lineage>
        <taxon>Bacteria</taxon>
        <taxon>Bacillati</taxon>
        <taxon>Actinomycetota</taxon>
        <taxon>Actinomycetes</taxon>
        <taxon>Mycobacteriales</taxon>
        <taxon>Nocardiaceae</taxon>
        <taxon>Nocardia</taxon>
    </lineage>
</organism>
<comment type="function">
    <text evidence="1">Catalyzes the condensation of ATP and 5-phosphoribose 1-diphosphate to form N'-(5'-phosphoribosyl)-ATP (PR-ATP). Has a crucial role in the pathway because the rate of histidine biosynthesis seems to be controlled primarily by regulation of HisG enzymatic activity.</text>
</comment>
<comment type="catalytic activity">
    <reaction evidence="1">
        <text>1-(5-phospho-beta-D-ribosyl)-ATP + diphosphate = 5-phospho-alpha-D-ribose 1-diphosphate + ATP</text>
        <dbReference type="Rhea" id="RHEA:18473"/>
        <dbReference type="ChEBI" id="CHEBI:30616"/>
        <dbReference type="ChEBI" id="CHEBI:33019"/>
        <dbReference type="ChEBI" id="CHEBI:58017"/>
        <dbReference type="ChEBI" id="CHEBI:73183"/>
        <dbReference type="EC" id="2.4.2.17"/>
    </reaction>
</comment>
<comment type="cofactor">
    <cofactor evidence="1">
        <name>Mg(2+)</name>
        <dbReference type="ChEBI" id="CHEBI:18420"/>
    </cofactor>
</comment>
<comment type="activity regulation">
    <text evidence="1">Feedback inhibited by histidine.</text>
</comment>
<comment type="pathway">
    <text evidence="1">Amino-acid biosynthesis; L-histidine biosynthesis; L-histidine from 5-phospho-alpha-D-ribose 1-diphosphate: step 1/9.</text>
</comment>
<comment type="subcellular location">
    <subcellularLocation>
        <location evidence="1">Cytoplasm</location>
    </subcellularLocation>
</comment>
<comment type="similarity">
    <text evidence="1">Belongs to the ATP phosphoribosyltransferase family. Long subfamily.</text>
</comment>
<proteinExistence type="inferred from homology"/>